<protein>
    <recommendedName>
        <fullName evidence="6">Protein MICROTUBULE BINDING PROTEIN 2C</fullName>
        <shortName evidence="6">AtMBP2C</shortName>
    </recommendedName>
    <alternativeName>
        <fullName evidence="6">Movement protein binding protein 2C</fullName>
    </alternativeName>
</protein>
<reference key="1">
    <citation type="journal article" date="1996" name="Plant J.">
        <title>Identification of plant cytoskeletal, cell cycle-related and polarity-related proteins using Schizosaccharomyces pombe.</title>
        <authorList>
            <person name="Xia G."/>
            <person name="Ramachandran S."/>
            <person name="Hong Y."/>
            <person name="Chan Y.-S."/>
            <person name="Simanis V."/>
            <person name="Chua N.-H."/>
        </authorList>
    </citation>
    <scope>NUCLEOTIDE SEQUENCE [MRNA] (ISOFORM 3)</scope>
    <scope>FUNCTION</scope>
</reference>
<reference key="2">
    <citation type="journal article" date="2000" name="Nature">
        <title>Sequence and analysis of chromosome 5 of the plant Arabidopsis thaliana.</title>
        <authorList>
            <person name="Tabata S."/>
            <person name="Kaneko T."/>
            <person name="Nakamura Y."/>
            <person name="Kotani H."/>
            <person name="Kato T."/>
            <person name="Asamizu E."/>
            <person name="Miyajima N."/>
            <person name="Sasamoto S."/>
            <person name="Kimura T."/>
            <person name="Hosouchi T."/>
            <person name="Kawashima K."/>
            <person name="Kohara M."/>
            <person name="Matsumoto M."/>
            <person name="Matsuno A."/>
            <person name="Muraki A."/>
            <person name="Nakayama S."/>
            <person name="Nakazaki N."/>
            <person name="Naruo K."/>
            <person name="Okumura S."/>
            <person name="Shinpo S."/>
            <person name="Takeuchi C."/>
            <person name="Wada T."/>
            <person name="Watanabe A."/>
            <person name="Yamada M."/>
            <person name="Yasuda M."/>
            <person name="Sato S."/>
            <person name="de la Bastide M."/>
            <person name="Huang E."/>
            <person name="Spiegel L."/>
            <person name="Gnoj L."/>
            <person name="O'Shaughnessy A."/>
            <person name="Preston R."/>
            <person name="Habermann K."/>
            <person name="Murray J."/>
            <person name="Johnson D."/>
            <person name="Rohlfing T."/>
            <person name="Nelson J."/>
            <person name="Stoneking T."/>
            <person name="Pepin K."/>
            <person name="Spieth J."/>
            <person name="Sekhon M."/>
            <person name="Armstrong J."/>
            <person name="Becker M."/>
            <person name="Belter E."/>
            <person name="Cordum H."/>
            <person name="Cordes M."/>
            <person name="Courtney L."/>
            <person name="Courtney W."/>
            <person name="Dante M."/>
            <person name="Du H."/>
            <person name="Edwards J."/>
            <person name="Fryman J."/>
            <person name="Haakensen B."/>
            <person name="Lamar E."/>
            <person name="Latreille P."/>
            <person name="Leonard S."/>
            <person name="Meyer R."/>
            <person name="Mulvaney E."/>
            <person name="Ozersky P."/>
            <person name="Riley A."/>
            <person name="Strowmatt C."/>
            <person name="Wagner-McPherson C."/>
            <person name="Wollam A."/>
            <person name="Yoakum M."/>
            <person name="Bell M."/>
            <person name="Dedhia N."/>
            <person name="Parnell L."/>
            <person name="Shah R."/>
            <person name="Rodriguez M."/>
            <person name="Hoon See L."/>
            <person name="Vil D."/>
            <person name="Baker J."/>
            <person name="Kirchoff K."/>
            <person name="Toth K."/>
            <person name="King L."/>
            <person name="Bahret A."/>
            <person name="Miller B."/>
            <person name="Marra M.A."/>
            <person name="Martienssen R."/>
            <person name="McCombie W.R."/>
            <person name="Wilson R.K."/>
            <person name="Murphy G."/>
            <person name="Bancroft I."/>
            <person name="Volckaert G."/>
            <person name="Wambutt R."/>
            <person name="Duesterhoeft A."/>
            <person name="Stiekema W."/>
            <person name="Pohl T."/>
            <person name="Entian K.-D."/>
            <person name="Terryn N."/>
            <person name="Hartley N."/>
            <person name="Bent E."/>
            <person name="Johnson S."/>
            <person name="Langham S.-A."/>
            <person name="McCullagh B."/>
            <person name="Robben J."/>
            <person name="Grymonprez B."/>
            <person name="Zimmermann W."/>
            <person name="Ramsperger U."/>
            <person name="Wedler H."/>
            <person name="Balke K."/>
            <person name="Wedler E."/>
            <person name="Peters S."/>
            <person name="van Staveren M."/>
            <person name="Dirkse W."/>
            <person name="Mooijman P."/>
            <person name="Klein Lankhorst R."/>
            <person name="Weitzenegger T."/>
            <person name="Bothe G."/>
            <person name="Rose M."/>
            <person name="Hauf J."/>
            <person name="Berneiser S."/>
            <person name="Hempel S."/>
            <person name="Feldpausch M."/>
            <person name="Lamberth S."/>
            <person name="Villarroel R."/>
            <person name="Gielen J."/>
            <person name="Ardiles W."/>
            <person name="Bents O."/>
            <person name="Lemcke K."/>
            <person name="Kolesov G."/>
            <person name="Mayer K.F.X."/>
            <person name="Rudd S."/>
            <person name="Schoof H."/>
            <person name="Schueller C."/>
            <person name="Zaccaria P."/>
            <person name="Mewes H.-W."/>
            <person name="Bevan M."/>
            <person name="Fransz P.F."/>
        </authorList>
    </citation>
    <scope>NUCLEOTIDE SEQUENCE [LARGE SCALE GENOMIC DNA]</scope>
    <source>
        <strain>cv. Columbia</strain>
    </source>
</reference>
<reference key="3">
    <citation type="journal article" date="2017" name="Plant J.">
        <title>Araport11: a complete reannotation of the Arabidopsis thaliana reference genome.</title>
        <authorList>
            <person name="Cheng C.Y."/>
            <person name="Krishnakumar V."/>
            <person name="Chan A.P."/>
            <person name="Thibaud-Nissen F."/>
            <person name="Schobel S."/>
            <person name="Town C.D."/>
        </authorList>
    </citation>
    <scope>GENOME REANNOTATION</scope>
    <source>
        <strain>cv. Columbia</strain>
    </source>
</reference>
<reference key="4">
    <citation type="journal article" date="2003" name="Science">
        <title>Empirical analysis of transcriptional activity in the Arabidopsis genome.</title>
        <authorList>
            <person name="Yamada K."/>
            <person name="Lim J."/>
            <person name="Dale J.M."/>
            <person name="Chen H."/>
            <person name="Shinn P."/>
            <person name="Palm C.J."/>
            <person name="Southwick A.M."/>
            <person name="Wu H.C."/>
            <person name="Kim C.J."/>
            <person name="Nguyen M."/>
            <person name="Pham P.K."/>
            <person name="Cheuk R.F."/>
            <person name="Karlin-Newmann G."/>
            <person name="Liu S.X."/>
            <person name="Lam B."/>
            <person name="Sakano H."/>
            <person name="Wu T."/>
            <person name="Yu G."/>
            <person name="Miranda M."/>
            <person name="Quach H.L."/>
            <person name="Tripp M."/>
            <person name="Chang C.H."/>
            <person name="Lee J.M."/>
            <person name="Toriumi M.J."/>
            <person name="Chan M.M."/>
            <person name="Tang C.C."/>
            <person name="Onodera C.S."/>
            <person name="Deng J.M."/>
            <person name="Akiyama K."/>
            <person name="Ansari Y."/>
            <person name="Arakawa T."/>
            <person name="Banh J."/>
            <person name="Banno F."/>
            <person name="Bowser L."/>
            <person name="Brooks S.Y."/>
            <person name="Carninci P."/>
            <person name="Chao Q."/>
            <person name="Choy N."/>
            <person name="Enju A."/>
            <person name="Goldsmith A.D."/>
            <person name="Gurjal M."/>
            <person name="Hansen N.F."/>
            <person name="Hayashizaki Y."/>
            <person name="Johnson-Hopson C."/>
            <person name="Hsuan V.W."/>
            <person name="Iida K."/>
            <person name="Karnes M."/>
            <person name="Khan S."/>
            <person name="Koesema E."/>
            <person name="Ishida J."/>
            <person name="Jiang P.X."/>
            <person name="Jones T."/>
            <person name="Kawai J."/>
            <person name="Kamiya A."/>
            <person name="Meyers C."/>
            <person name="Nakajima M."/>
            <person name="Narusaka M."/>
            <person name="Seki M."/>
            <person name="Sakurai T."/>
            <person name="Satou M."/>
            <person name="Tamse R."/>
            <person name="Vaysberg M."/>
            <person name="Wallender E.K."/>
            <person name="Wong C."/>
            <person name="Yamamura Y."/>
            <person name="Yuan S."/>
            <person name="Shinozaki K."/>
            <person name="Davis R.W."/>
            <person name="Theologis A."/>
            <person name="Ecker J.R."/>
        </authorList>
    </citation>
    <scope>NUCLEOTIDE SEQUENCE [LARGE SCALE MRNA] (ISOFORM 1)</scope>
    <source>
        <strain>cv. Columbia</strain>
    </source>
</reference>
<reference key="5">
    <citation type="journal article" date="2007" name="Plant Cell">
        <title>MPB2C, a microtubule-associated protein, regulates non-cell-autonomy of the homeodomain protein KNOTTED1.</title>
        <authorList>
            <person name="Winter N."/>
            <person name="Kollwig G."/>
            <person name="Zhang S."/>
            <person name="Kragler F."/>
        </authorList>
    </citation>
    <scope>FUNCTION</scope>
    <scope>SUBCELLULAR LOCATION</scope>
    <scope>INTERACTION WITH STM</scope>
    <scope>TISSUE SPECIFICITY</scope>
    <scope>DEVELOPMENTAL STAGE</scope>
    <source>
        <strain>cv. Columbia</strain>
    </source>
</reference>
<reference key="6">
    <citation type="journal article" date="2009" name="Plant Physiol.">
        <title>Microtubule-associated protein AtMPB2C plays a role in organization of cortical microtubules, stomata patterning, and tobamovirus infectivity.</title>
        <authorList>
            <person name="Ruggenthaler P."/>
            <person name="Fichtenbauer D."/>
            <person name="Krasensky J."/>
            <person name="Jonak C."/>
            <person name="Waigmann E."/>
        </authorList>
    </citation>
    <scope>FUNCTION</scope>
    <scope>SUBCELLULAR LOCATION</scope>
    <source>
        <strain>cv. Columbia</strain>
    </source>
</reference>
<name>MBP2C_ARATH</name>
<organism>
    <name type="scientific">Arabidopsis thaliana</name>
    <name type="common">Mouse-ear cress</name>
    <dbReference type="NCBI Taxonomy" id="3702"/>
    <lineage>
        <taxon>Eukaryota</taxon>
        <taxon>Viridiplantae</taxon>
        <taxon>Streptophyta</taxon>
        <taxon>Embryophyta</taxon>
        <taxon>Tracheophyta</taxon>
        <taxon>Spermatophyta</taxon>
        <taxon>Magnoliopsida</taxon>
        <taxon>eudicotyledons</taxon>
        <taxon>Gunneridae</taxon>
        <taxon>Pentapetalae</taxon>
        <taxon>rosids</taxon>
        <taxon>malvids</taxon>
        <taxon>Brassicales</taxon>
        <taxon>Brassicaceae</taxon>
        <taxon>Camelineae</taxon>
        <taxon>Arabidopsis</taxon>
    </lineage>
</organism>
<proteinExistence type="evidence at protein level"/>
<sequence>MYEQQQHFMDLQSDSGFGDDSSWLAGDDDLRLSPHQSAAGTNSGNENLDRRLLKDLVEMVPLIEHYMEHKERSSFKRRGSMIYTKMPSKESLSRRGRNASQTVPGRKKRDQEGNDDVMNNSREDDENAKALAGAEKEEMSRLREQVNDLQTKLSEKEEVLKSMEMSKNQVNEIQEKLEATNRLVAEKDMLIKSMQLQLSDTKIKLADKQAALEKTQWEAKTTGTRAIKLQEQLDAVEGDISTFTRVFETLAKTDSKKPDRDYDAVPYEFDHLPYLDDVDETDLRKMEEARLAYVAAVNTAKEREDEESLVMAAQARAYLQSLAFTY</sequence>
<keyword id="KW-0025">Alternative splicing</keyword>
<keyword id="KW-0175">Coiled coil</keyword>
<keyword id="KW-0963">Cytoplasm</keyword>
<keyword id="KW-0206">Cytoskeleton</keyword>
<keyword id="KW-0611">Plant defense</keyword>
<keyword id="KW-1185">Reference proteome</keyword>
<keyword id="KW-0694">RNA-binding</keyword>
<evidence type="ECO:0000255" key="1"/>
<evidence type="ECO:0000256" key="2">
    <source>
        <dbReference type="SAM" id="MobiDB-lite"/>
    </source>
</evidence>
<evidence type="ECO:0000269" key="3">
    <source>
    </source>
</evidence>
<evidence type="ECO:0000269" key="4">
    <source>
    </source>
</evidence>
<evidence type="ECO:0000269" key="5">
    <source>
    </source>
</evidence>
<evidence type="ECO:0000303" key="6">
    <source>
    </source>
</evidence>
<evidence type="ECO:0000303" key="7">
    <source>
    </source>
</evidence>
<evidence type="ECO:0000305" key="8"/>
<evidence type="ECO:0000312" key="9">
    <source>
        <dbReference type="Araport" id="AT5G08120"/>
    </source>
</evidence>
<evidence type="ECO:0000312" key="10">
    <source>
        <dbReference type="EMBL" id="CAB93713.1"/>
    </source>
</evidence>
<comment type="function">
    <text evidence="3 4 5">Prevents homeodomain proteins (e.g. STM) association to plasmodesmata and, consequently, cell-to-cell transport. Binds to RNA. Alters STM RNA binding capacity (PubMed:17965274). Regulates cytoskeleton (e.g. actin) organization that determinates cell shape (PubMed:19074626, PubMed:8893552). Regulates stomata patterning and drought tolerance (PubMed:19074626). Involved in restricting tobamovirus (e.g. oilseed rape mosaic virus) infectivity, probably by interfering with cell-to-cell virus movement (PubMed:19074626).</text>
</comment>
<comment type="subunit">
    <text evidence="3">Interacts with STM.</text>
</comment>
<comment type="subcellular location">
    <subcellularLocation>
        <location evidence="3 4">Cytoplasm</location>
        <location evidence="3 4">Cytoskeleton</location>
    </subcellularLocation>
    <text evidence="3 4">Microtubule-associated and stabilizer (PubMed:17965274, PubMed:19074626). Localized in cytosolic punctae when associated with STM (PubMed:17965274).</text>
</comment>
<comment type="alternative products">
    <event type="alternative splicing"/>
    <isoform>
        <id>Q9LEZ4-1</id>
        <name>1</name>
        <sequence type="displayed"/>
    </isoform>
    <isoform>
        <id>Q9LEZ4-2</id>
        <name>2</name>
        <sequence type="described" ref="VSP_059023 VSP_059024"/>
    </isoform>
    <isoform>
        <id>Q9LEZ4-3</id>
        <name>3</name>
        <sequence type="described" ref="VSP_059022"/>
    </isoform>
</comment>
<comment type="tissue specificity">
    <text evidence="3">Expressed in seedlings, roots, flowers and developing ovules.</text>
</comment>
<comment type="developmental stage">
    <text evidence="3">In young seedlings, expressed in the vascular tissues of cotyledons, leaf primordia, and shoot apical meristem (SAM). In roots, confined to a limited number of epidermal cells in proximity to the root apical meristem. In flowers, present in carpels and ovules. In developing ovules, observed in the funiculus and integuments.</text>
</comment>
<comment type="similarity">
    <text evidence="8">Belongs to the microtubule binding protein 2C family.</text>
</comment>
<accession>Q9LEZ4</accession>
<accession>A0A1P8BFS6</accession>
<accession>P92987</accession>
<feature type="chain" id="PRO_0000441029" description="Protein MICROTUBULE BINDING PROTEIN 2C">
    <location>
        <begin position="1"/>
        <end position="326"/>
    </location>
</feature>
<feature type="region of interest" description="Disordered" evidence="2">
    <location>
        <begin position="1"/>
        <end position="46"/>
    </location>
</feature>
<feature type="region of interest" description="Disordered" evidence="2">
    <location>
        <begin position="71"/>
        <end position="132"/>
    </location>
</feature>
<feature type="coiled-coil region" evidence="1">
    <location>
        <begin position="132"/>
        <end position="183"/>
    </location>
</feature>
<feature type="compositionally biased region" description="Polar residues" evidence="2">
    <location>
        <begin position="1"/>
        <end position="15"/>
    </location>
</feature>
<feature type="compositionally biased region" description="Polar residues" evidence="2">
    <location>
        <begin position="34"/>
        <end position="46"/>
    </location>
</feature>
<feature type="splice variant" id="VSP_059022" description="In isoform 3.">
    <location>
        <begin position="1"/>
        <end position="117"/>
    </location>
</feature>
<feature type="splice variant" id="VSP_059023" description="In isoform 2.">
    <original>LDDVDETDLRKMEEARLAYV</original>
    <variation>LVSQRNHNPHLSFFLFFFFG</variation>
    <location>
        <begin position="275"/>
        <end position="294"/>
    </location>
</feature>
<feature type="splice variant" id="VSP_059024" description="In isoform 2.">
    <location>
        <begin position="295"/>
        <end position="326"/>
    </location>
</feature>
<gene>
    <name evidence="6" type="primary">MBP2C</name>
    <name evidence="7" type="synonym">AT18</name>
    <name evidence="9" type="ordered locus">At5g08120</name>
    <name evidence="10" type="ORF">T22D6.60</name>
</gene>
<dbReference type="EMBL" id="U62744">
    <property type="protein sequence ID" value="AAB38778.1"/>
    <property type="molecule type" value="mRNA"/>
</dbReference>
<dbReference type="EMBL" id="AL357612">
    <property type="protein sequence ID" value="CAB93713.1"/>
    <property type="molecule type" value="Genomic_DNA"/>
</dbReference>
<dbReference type="EMBL" id="CP002688">
    <property type="protein sequence ID" value="AED91249.1"/>
    <property type="molecule type" value="Genomic_DNA"/>
</dbReference>
<dbReference type="EMBL" id="CP002688">
    <property type="protein sequence ID" value="ANM70463.1"/>
    <property type="molecule type" value="Genomic_DNA"/>
</dbReference>
<dbReference type="EMBL" id="AF370224">
    <property type="protein sequence ID" value="AAK44039.1"/>
    <property type="molecule type" value="mRNA"/>
</dbReference>
<dbReference type="EMBL" id="AY117260">
    <property type="protein sequence ID" value="AAM51335.1"/>
    <property type="molecule type" value="mRNA"/>
</dbReference>
<dbReference type="PIR" id="T50497">
    <property type="entry name" value="T50497"/>
</dbReference>
<dbReference type="RefSeq" id="NP_001332071.1">
    <molecule id="Q9LEZ4-2"/>
    <property type="nucleotide sequence ID" value="NM_001342982.1"/>
</dbReference>
<dbReference type="RefSeq" id="NP_196429.1">
    <molecule id="Q9LEZ4-1"/>
    <property type="nucleotide sequence ID" value="NM_120894.5"/>
</dbReference>
<dbReference type="SMR" id="Q9LEZ4"/>
<dbReference type="FunCoup" id="Q9LEZ4">
    <property type="interactions" value="2740"/>
</dbReference>
<dbReference type="STRING" id="3702.Q9LEZ4"/>
<dbReference type="iPTMnet" id="Q9LEZ4"/>
<dbReference type="PaxDb" id="3702-AT5G08120.1"/>
<dbReference type="ProteomicsDB" id="238375">
    <molecule id="Q9LEZ4-1"/>
</dbReference>
<dbReference type="DNASU" id="830707"/>
<dbReference type="EnsemblPlants" id="AT5G08120.1">
    <molecule id="Q9LEZ4-1"/>
    <property type="protein sequence ID" value="AT5G08120.1"/>
    <property type="gene ID" value="AT5G08120"/>
</dbReference>
<dbReference type="EnsemblPlants" id="AT5G08120.2">
    <molecule id="Q9LEZ4-2"/>
    <property type="protein sequence ID" value="AT5G08120.2"/>
    <property type="gene ID" value="AT5G08120"/>
</dbReference>
<dbReference type="GeneID" id="830707"/>
<dbReference type="Gramene" id="AT5G08120.1">
    <molecule id="Q9LEZ4-1"/>
    <property type="protein sequence ID" value="AT5G08120.1"/>
    <property type="gene ID" value="AT5G08120"/>
</dbReference>
<dbReference type="Gramene" id="AT5G08120.2">
    <molecule id="Q9LEZ4-2"/>
    <property type="protein sequence ID" value="AT5G08120.2"/>
    <property type="gene ID" value="AT5G08120"/>
</dbReference>
<dbReference type="KEGG" id="ath:AT5G08120"/>
<dbReference type="Araport" id="AT5G08120"/>
<dbReference type="TAIR" id="AT5G08120">
    <property type="gene designation" value="MPB2C"/>
</dbReference>
<dbReference type="eggNOG" id="ENOG502QS43">
    <property type="taxonomic scope" value="Eukaryota"/>
</dbReference>
<dbReference type="HOGENOM" id="CLU_078364_0_0_1"/>
<dbReference type="InParanoid" id="Q9LEZ4"/>
<dbReference type="OMA" id="SMQADIS"/>
<dbReference type="OrthoDB" id="1915670at2759"/>
<dbReference type="PhylomeDB" id="Q9LEZ4"/>
<dbReference type="PRO" id="PR:Q9LEZ4"/>
<dbReference type="Proteomes" id="UP000006548">
    <property type="component" value="Chromosome 5"/>
</dbReference>
<dbReference type="ExpressionAtlas" id="Q9LEZ4">
    <property type="expression patterns" value="baseline and differential"/>
</dbReference>
<dbReference type="GO" id="GO:0005737">
    <property type="term" value="C:cytoplasm"/>
    <property type="evidence" value="ECO:0007669"/>
    <property type="project" value="UniProtKB-KW"/>
</dbReference>
<dbReference type="GO" id="GO:0015630">
    <property type="term" value="C:microtubule cytoskeleton"/>
    <property type="evidence" value="ECO:0000314"/>
    <property type="project" value="UniProtKB"/>
</dbReference>
<dbReference type="GO" id="GO:0008017">
    <property type="term" value="F:microtubule binding"/>
    <property type="evidence" value="ECO:0007669"/>
    <property type="project" value="InterPro"/>
</dbReference>
<dbReference type="GO" id="GO:0003723">
    <property type="term" value="F:RNA binding"/>
    <property type="evidence" value="ECO:0000314"/>
    <property type="project" value="UniProtKB"/>
</dbReference>
<dbReference type="GO" id="GO:0043622">
    <property type="term" value="P:cortical microtubule organization"/>
    <property type="evidence" value="ECO:0000315"/>
    <property type="project" value="TAIR"/>
</dbReference>
<dbReference type="GO" id="GO:0051607">
    <property type="term" value="P:defense response to virus"/>
    <property type="evidence" value="ECO:0000315"/>
    <property type="project" value="TAIR"/>
</dbReference>
<dbReference type="GO" id="GO:0051224">
    <property type="term" value="P:negative regulation of protein transport"/>
    <property type="evidence" value="ECO:0000314"/>
    <property type="project" value="UniProtKB"/>
</dbReference>
<dbReference type="GO" id="GO:0010497">
    <property type="term" value="P:plasmodesmata-mediated intercellular transport"/>
    <property type="evidence" value="ECO:0000314"/>
    <property type="project" value="UniProtKB"/>
</dbReference>
<dbReference type="GO" id="GO:0002230">
    <property type="term" value="P:positive regulation of defense response to virus by host"/>
    <property type="evidence" value="ECO:0000315"/>
    <property type="project" value="UniProtKB"/>
</dbReference>
<dbReference type="GO" id="GO:0051493">
    <property type="term" value="P:regulation of cytoskeleton organization"/>
    <property type="evidence" value="ECO:0000314"/>
    <property type="project" value="UniProtKB"/>
</dbReference>
<dbReference type="GO" id="GO:0009414">
    <property type="term" value="P:response to water deprivation"/>
    <property type="evidence" value="ECO:0000315"/>
    <property type="project" value="TAIR"/>
</dbReference>
<dbReference type="GO" id="GO:0010375">
    <property type="term" value="P:stomatal complex patterning"/>
    <property type="evidence" value="ECO:0000315"/>
    <property type="project" value="TAIR"/>
</dbReference>
<dbReference type="InterPro" id="IPR040289">
    <property type="entry name" value="MBP2C"/>
</dbReference>
<dbReference type="PANTHER" id="PTHR35502">
    <property type="entry name" value="PROTEIN MICROTUBULE BINDING PROTEIN 2C"/>
    <property type="match status" value="1"/>
</dbReference>
<dbReference type="PANTHER" id="PTHR35502:SF2">
    <property type="entry name" value="PROTEIN MICROTUBULE BINDING PROTEIN 2C"/>
    <property type="match status" value="1"/>
</dbReference>